<accession>A8GUK2</accession>
<feature type="chain" id="PRO_1000006606" description="Cysteine--tRNA ligase">
    <location>
        <begin position="1"/>
        <end position="458"/>
    </location>
</feature>
<feature type="short sequence motif" description="'HIGH' region">
    <location>
        <begin position="31"/>
        <end position="41"/>
    </location>
</feature>
<feature type="short sequence motif" description="'KMSKS' region">
    <location>
        <begin position="272"/>
        <end position="276"/>
    </location>
</feature>
<feature type="binding site" evidence="1">
    <location>
        <position position="29"/>
    </location>
    <ligand>
        <name>Zn(2+)</name>
        <dbReference type="ChEBI" id="CHEBI:29105"/>
    </ligand>
</feature>
<feature type="binding site" evidence="1">
    <location>
        <position position="214"/>
    </location>
    <ligand>
        <name>Zn(2+)</name>
        <dbReference type="ChEBI" id="CHEBI:29105"/>
    </ligand>
</feature>
<feature type="binding site" evidence="1">
    <location>
        <position position="239"/>
    </location>
    <ligand>
        <name>Zn(2+)</name>
        <dbReference type="ChEBI" id="CHEBI:29105"/>
    </ligand>
</feature>
<feature type="binding site" evidence="1">
    <location>
        <position position="243"/>
    </location>
    <ligand>
        <name>Zn(2+)</name>
        <dbReference type="ChEBI" id="CHEBI:29105"/>
    </ligand>
</feature>
<feature type="binding site" evidence="1">
    <location>
        <position position="275"/>
    </location>
    <ligand>
        <name>ATP</name>
        <dbReference type="ChEBI" id="CHEBI:30616"/>
    </ligand>
</feature>
<reference key="1">
    <citation type="submission" date="2007-09" db="EMBL/GenBank/DDBJ databases">
        <title>Complete genome sequencing of Rickettsia bellii.</title>
        <authorList>
            <person name="Madan A."/>
            <person name="Lee H."/>
            <person name="Madan A."/>
            <person name="Yoon J.-G."/>
            <person name="Ryu G.-Y."/>
            <person name="Dasch G."/>
            <person name="Ereemeva M."/>
        </authorList>
    </citation>
    <scope>NUCLEOTIDE SEQUENCE [LARGE SCALE GENOMIC DNA]</scope>
    <source>
        <strain>OSU 85-389</strain>
    </source>
</reference>
<organism>
    <name type="scientific">Rickettsia bellii (strain OSU 85-389)</name>
    <dbReference type="NCBI Taxonomy" id="391896"/>
    <lineage>
        <taxon>Bacteria</taxon>
        <taxon>Pseudomonadati</taxon>
        <taxon>Pseudomonadota</taxon>
        <taxon>Alphaproteobacteria</taxon>
        <taxon>Rickettsiales</taxon>
        <taxon>Rickettsiaceae</taxon>
        <taxon>Rickettsieae</taxon>
        <taxon>Rickettsia</taxon>
        <taxon>belli group</taxon>
    </lineage>
</organism>
<sequence>MQIYLFNTLTQNKELFEPEDQTNVKMYVCGPTVYDNPHIGNSRSVVVYDLLYRILVDIFEAKSVKYVRNITDVDDKIIERAANLGISINELTDKVTKEFHTNMKYLFCLPPTIEPKATQHIDVMIEIIEKLIKSGHAYIADDHVYFDVLLAPNYTELSNRKLEDMFESVRVENSKTKKHPQDFVLWKPAKPDEDVHMNFKSPWGLGRPGWHIECSAMSYKYLGKNFDIHGGGADLIFPHHTNEIAQSKCAFSNSTYAKYWVHNGFLTVNGEKMSKSLGNFITVRDLMDKQIKGEIVRLFLLTAHYRRPLDYNDKAIEDAKKTLDYWYRAIQNINIQKIDTLPSDFMQSLFDDMNSPLAIKIINDYAKAIFTATNEEEKQFNASNLIACANFIGLMNETPHEWFNKDVDENYINNLINERLEAKKQKNWGLADQIRNKLLNEKIILEDKPNGTTIWRKE</sequence>
<protein>
    <recommendedName>
        <fullName evidence="1">Cysteine--tRNA ligase</fullName>
        <ecNumber evidence="1">6.1.1.16</ecNumber>
    </recommendedName>
    <alternativeName>
        <fullName evidence="1">Cysteinyl-tRNA synthetase</fullName>
        <shortName evidence="1">CysRS</shortName>
    </alternativeName>
</protein>
<proteinExistence type="inferred from homology"/>
<gene>
    <name evidence="1" type="primary">cysS</name>
    <name type="ordered locus">A1I_00460</name>
</gene>
<keyword id="KW-0030">Aminoacyl-tRNA synthetase</keyword>
<keyword id="KW-0067">ATP-binding</keyword>
<keyword id="KW-0963">Cytoplasm</keyword>
<keyword id="KW-0436">Ligase</keyword>
<keyword id="KW-0479">Metal-binding</keyword>
<keyword id="KW-0547">Nucleotide-binding</keyword>
<keyword id="KW-0648">Protein biosynthesis</keyword>
<keyword id="KW-0862">Zinc</keyword>
<evidence type="ECO:0000255" key="1">
    <source>
        <dbReference type="HAMAP-Rule" id="MF_00041"/>
    </source>
</evidence>
<dbReference type="EC" id="6.1.1.16" evidence="1"/>
<dbReference type="EMBL" id="CP000849">
    <property type="protein sequence ID" value="ABV78498.1"/>
    <property type="molecule type" value="Genomic_DNA"/>
</dbReference>
<dbReference type="RefSeq" id="WP_011477932.1">
    <property type="nucleotide sequence ID" value="NC_009883.1"/>
</dbReference>
<dbReference type="SMR" id="A8GUK2"/>
<dbReference type="KEGG" id="rbo:A1I_00460"/>
<dbReference type="HOGENOM" id="CLU_013528_0_1_5"/>
<dbReference type="GO" id="GO:0005829">
    <property type="term" value="C:cytosol"/>
    <property type="evidence" value="ECO:0007669"/>
    <property type="project" value="TreeGrafter"/>
</dbReference>
<dbReference type="GO" id="GO:0005524">
    <property type="term" value="F:ATP binding"/>
    <property type="evidence" value="ECO:0007669"/>
    <property type="project" value="UniProtKB-UniRule"/>
</dbReference>
<dbReference type="GO" id="GO:0004817">
    <property type="term" value="F:cysteine-tRNA ligase activity"/>
    <property type="evidence" value="ECO:0007669"/>
    <property type="project" value="UniProtKB-UniRule"/>
</dbReference>
<dbReference type="GO" id="GO:0008270">
    <property type="term" value="F:zinc ion binding"/>
    <property type="evidence" value="ECO:0007669"/>
    <property type="project" value="UniProtKB-UniRule"/>
</dbReference>
<dbReference type="GO" id="GO:0006423">
    <property type="term" value="P:cysteinyl-tRNA aminoacylation"/>
    <property type="evidence" value="ECO:0007669"/>
    <property type="project" value="UniProtKB-UniRule"/>
</dbReference>
<dbReference type="CDD" id="cd00672">
    <property type="entry name" value="CysRS_core"/>
    <property type="match status" value="1"/>
</dbReference>
<dbReference type="FunFam" id="3.40.50.620:FF:000068">
    <property type="entry name" value="Cysteine--tRNA ligase"/>
    <property type="match status" value="1"/>
</dbReference>
<dbReference type="Gene3D" id="1.20.120.1910">
    <property type="entry name" value="Cysteine-tRNA ligase, C-terminal anti-codon recognition domain"/>
    <property type="match status" value="1"/>
</dbReference>
<dbReference type="Gene3D" id="3.40.50.620">
    <property type="entry name" value="HUPs"/>
    <property type="match status" value="1"/>
</dbReference>
<dbReference type="HAMAP" id="MF_00041">
    <property type="entry name" value="Cys_tRNA_synth"/>
    <property type="match status" value="1"/>
</dbReference>
<dbReference type="InterPro" id="IPR015803">
    <property type="entry name" value="Cys-tRNA-ligase"/>
</dbReference>
<dbReference type="InterPro" id="IPR015273">
    <property type="entry name" value="Cys-tRNA-synt_Ia_DALR"/>
</dbReference>
<dbReference type="InterPro" id="IPR024909">
    <property type="entry name" value="Cys-tRNA/MSH_ligase"/>
</dbReference>
<dbReference type="InterPro" id="IPR014729">
    <property type="entry name" value="Rossmann-like_a/b/a_fold"/>
</dbReference>
<dbReference type="InterPro" id="IPR032678">
    <property type="entry name" value="tRNA-synt_1_cat_dom"/>
</dbReference>
<dbReference type="InterPro" id="IPR009080">
    <property type="entry name" value="tRNAsynth_Ia_anticodon-bd"/>
</dbReference>
<dbReference type="NCBIfam" id="TIGR00435">
    <property type="entry name" value="cysS"/>
    <property type="match status" value="1"/>
</dbReference>
<dbReference type="PANTHER" id="PTHR10890:SF3">
    <property type="entry name" value="CYSTEINE--TRNA LIGASE, CYTOPLASMIC"/>
    <property type="match status" value="1"/>
</dbReference>
<dbReference type="PANTHER" id="PTHR10890">
    <property type="entry name" value="CYSTEINYL-TRNA SYNTHETASE"/>
    <property type="match status" value="1"/>
</dbReference>
<dbReference type="Pfam" id="PF01406">
    <property type="entry name" value="tRNA-synt_1e"/>
    <property type="match status" value="1"/>
</dbReference>
<dbReference type="PRINTS" id="PR00983">
    <property type="entry name" value="TRNASYNTHCYS"/>
</dbReference>
<dbReference type="SMART" id="SM00840">
    <property type="entry name" value="DALR_2"/>
    <property type="match status" value="1"/>
</dbReference>
<dbReference type="SUPFAM" id="SSF47323">
    <property type="entry name" value="Anticodon-binding domain of a subclass of class I aminoacyl-tRNA synthetases"/>
    <property type="match status" value="1"/>
</dbReference>
<dbReference type="SUPFAM" id="SSF52374">
    <property type="entry name" value="Nucleotidylyl transferase"/>
    <property type="match status" value="1"/>
</dbReference>
<name>SYC_RICB8</name>
<comment type="catalytic activity">
    <reaction evidence="1">
        <text>tRNA(Cys) + L-cysteine + ATP = L-cysteinyl-tRNA(Cys) + AMP + diphosphate</text>
        <dbReference type="Rhea" id="RHEA:17773"/>
        <dbReference type="Rhea" id="RHEA-COMP:9661"/>
        <dbReference type="Rhea" id="RHEA-COMP:9679"/>
        <dbReference type="ChEBI" id="CHEBI:30616"/>
        <dbReference type="ChEBI" id="CHEBI:33019"/>
        <dbReference type="ChEBI" id="CHEBI:35235"/>
        <dbReference type="ChEBI" id="CHEBI:78442"/>
        <dbReference type="ChEBI" id="CHEBI:78517"/>
        <dbReference type="ChEBI" id="CHEBI:456215"/>
        <dbReference type="EC" id="6.1.1.16"/>
    </reaction>
</comment>
<comment type="cofactor">
    <cofactor evidence="1">
        <name>Zn(2+)</name>
        <dbReference type="ChEBI" id="CHEBI:29105"/>
    </cofactor>
    <text evidence="1">Binds 1 zinc ion per subunit.</text>
</comment>
<comment type="subunit">
    <text evidence="1">Monomer.</text>
</comment>
<comment type="subcellular location">
    <subcellularLocation>
        <location evidence="1">Cytoplasm</location>
    </subcellularLocation>
</comment>
<comment type="similarity">
    <text evidence="1">Belongs to the class-I aminoacyl-tRNA synthetase family.</text>
</comment>